<name>MNHB2_STAS1</name>
<comment type="subunit">
    <text evidence="1">May form a heterooligomeric complex that consists of seven subunits: mnhA2, mnhB2, mnhC2, mnhD2, mnhE2, mnhF2 and mnhG2.</text>
</comment>
<comment type="subcellular location">
    <subcellularLocation>
        <location evidence="3">Cell membrane</location>
        <topology evidence="3">Multi-pass membrane protein</topology>
    </subcellularLocation>
</comment>
<comment type="similarity">
    <text evidence="3">Belongs to the CPA3 antiporters (TC 2.A.63) subunit B family.</text>
</comment>
<reference key="1">
    <citation type="journal article" date="2005" name="Proc. Natl. Acad. Sci. U.S.A.">
        <title>Whole genome sequence of Staphylococcus saprophyticus reveals the pathogenesis of uncomplicated urinary tract infection.</title>
        <authorList>
            <person name="Kuroda M."/>
            <person name="Yamashita A."/>
            <person name="Hirakawa H."/>
            <person name="Kumano M."/>
            <person name="Morikawa K."/>
            <person name="Higashide M."/>
            <person name="Maruyama A."/>
            <person name="Inose Y."/>
            <person name="Matoba K."/>
            <person name="Toh H."/>
            <person name="Kuhara S."/>
            <person name="Hattori M."/>
            <person name="Ohta T."/>
        </authorList>
    </citation>
    <scope>NUCLEOTIDE SEQUENCE [LARGE SCALE GENOMIC DNA]</scope>
    <source>
        <strain>ATCC 15305 / DSM 20229 / NCIMB 8711 / NCTC 7292 / S-41</strain>
    </source>
</reference>
<keyword id="KW-0050">Antiport</keyword>
<keyword id="KW-1003">Cell membrane</keyword>
<keyword id="KW-0406">Ion transport</keyword>
<keyword id="KW-0472">Membrane</keyword>
<keyword id="KW-1185">Reference proteome</keyword>
<keyword id="KW-0812">Transmembrane</keyword>
<keyword id="KW-1133">Transmembrane helix</keyword>
<keyword id="KW-0813">Transport</keyword>
<sequence>MKENDVVLKTVTKIVVFILLTFGFYLFLAGHNNPGGGFIGGLVFSSAFLLMFLAFDVKQVLVALPLDFRILMICGSLLSFLTAVVPMFFGKPFLYQTDAYVQLPLLGEVHLTTVTVFEAGIVLAVVGVVVTVMLSISGGRS</sequence>
<proteinExistence type="inferred from homology"/>
<feature type="chain" id="PRO_0000372284" description="Putative antiporter subunit mnhB2">
    <location>
        <begin position="1"/>
        <end position="141"/>
    </location>
</feature>
<feature type="transmembrane region" description="Helical" evidence="2">
    <location>
        <begin position="10"/>
        <end position="30"/>
    </location>
</feature>
<feature type="transmembrane region" description="Helical" evidence="2">
    <location>
        <begin position="35"/>
        <end position="55"/>
    </location>
</feature>
<feature type="transmembrane region" description="Helical" evidence="2">
    <location>
        <begin position="70"/>
        <end position="90"/>
    </location>
</feature>
<feature type="transmembrane region" description="Helical" evidence="2">
    <location>
        <begin position="116"/>
        <end position="136"/>
    </location>
</feature>
<dbReference type="EMBL" id="AP008934">
    <property type="protein sequence ID" value="BAE19240.1"/>
    <property type="molecule type" value="Genomic_DNA"/>
</dbReference>
<dbReference type="RefSeq" id="WP_011303737.1">
    <property type="nucleotide sequence ID" value="NZ_MTGA01000039.1"/>
</dbReference>
<dbReference type="SMR" id="Q49VH0"/>
<dbReference type="GeneID" id="66868252"/>
<dbReference type="KEGG" id="ssp:SSP2095"/>
<dbReference type="eggNOG" id="COG2111">
    <property type="taxonomic scope" value="Bacteria"/>
</dbReference>
<dbReference type="HOGENOM" id="CLU_101659_1_1_9"/>
<dbReference type="OrthoDB" id="9798859at2"/>
<dbReference type="Proteomes" id="UP000006371">
    <property type="component" value="Chromosome"/>
</dbReference>
<dbReference type="GO" id="GO:0005886">
    <property type="term" value="C:plasma membrane"/>
    <property type="evidence" value="ECO:0007669"/>
    <property type="project" value="UniProtKB-SubCell"/>
</dbReference>
<dbReference type="GO" id="GO:0015297">
    <property type="term" value="F:antiporter activity"/>
    <property type="evidence" value="ECO:0007669"/>
    <property type="project" value="UniProtKB-KW"/>
</dbReference>
<dbReference type="GO" id="GO:0006811">
    <property type="term" value="P:monoatomic ion transport"/>
    <property type="evidence" value="ECO:0007669"/>
    <property type="project" value="UniProtKB-KW"/>
</dbReference>
<dbReference type="InterPro" id="IPR050622">
    <property type="entry name" value="CPA3_antiporter_subunitB"/>
</dbReference>
<dbReference type="InterPro" id="IPR007182">
    <property type="entry name" value="MnhB"/>
</dbReference>
<dbReference type="NCBIfam" id="NF009223">
    <property type="entry name" value="PRK12573.1"/>
    <property type="match status" value="1"/>
</dbReference>
<dbReference type="NCBIfam" id="NF009224">
    <property type="entry name" value="PRK12574.1"/>
    <property type="match status" value="1"/>
</dbReference>
<dbReference type="PANTHER" id="PTHR33932">
    <property type="entry name" value="NA(+)/H(+) ANTIPORTER SUBUNIT B"/>
    <property type="match status" value="1"/>
</dbReference>
<dbReference type="PANTHER" id="PTHR33932:SF4">
    <property type="entry name" value="NA(+)_H(+) ANTIPORTER SUBUNIT B"/>
    <property type="match status" value="1"/>
</dbReference>
<dbReference type="Pfam" id="PF04039">
    <property type="entry name" value="MnhB"/>
    <property type="match status" value="1"/>
</dbReference>
<protein>
    <recommendedName>
        <fullName>Putative antiporter subunit mnhB2</fullName>
    </recommendedName>
    <alternativeName>
        <fullName>Mrp complex subunit B2</fullName>
    </alternativeName>
    <alternativeName>
        <fullName>Putative NADH-ubiquinone oxidoreductase subunit mnhB2</fullName>
    </alternativeName>
</protein>
<accession>Q49VH0</accession>
<evidence type="ECO:0000250" key="1"/>
<evidence type="ECO:0000255" key="2"/>
<evidence type="ECO:0000305" key="3"/>
<organism>
    <name type="scientific">Staphylococcus saprophyticus subsp. saprophyticus (strain ATCC 15305 / DSM 20229 / NCIMB 8711 / NCTC 7292 / S-41)</name>
    <dbReference type="NCBI Taxonomy" id="342451"/>
    <lineage>
        <taxon>Bacteria</taxon>
        <taxon>Bacillati</taxon>
        <taxon>Bacillota</taxon>
        <taxon>Bacilli</taxon>
        <taxon>Bacillales</taxon>
        <taxon>Staphylococcaceae</taxon>
        <taxon>Staphylococcus</taxon>
    </lineage>
</organism>
<gene>
    <name type="primary">mnhB2</name>
    <name type="synonym">mrpB2</name>
    <name type="ordered locus">SSP2095</name>
</gene>